<comment type="function">
    <text evidence="1">Plays an essential role in the initiation and regulation of chromosomal replication. ATP-DnaA binds to the origin of replication (oriC) to initiate formation of the DNA replication initiation complex once per cell cycle. Binds the DnaA box (a 9 base pair repeat at the origin) and separates the double-stranded (ds)DNA. Forms a right-handed helical filament on oriC DNA; dsDNA binds to the exterior of the filament while single-stranded (ss)DNA is stabiized in the filament's interior. The ATP-DnaA-oriC complex binds and stabilizes one strand of the AT-rich DNA unwinding element (DUE), permitting loading of DNA polymerase. After initiation quickly degrades to an ADP-DnaA complex that is not apt for DNA replication. Binds acidic phospholipids.</text>
</comment>
<comment type="subunit">
    <text evidence="1">Oligomerizes as a right-handed, spiral filament on DNA at oriC.</text>
</comment>
<comment type="subcellular location">
    <subcellularLocation>
        <location evidence="1">Cytoplasm</location>
    </subcellularLocation>
</comment>
<comment type="domain">
    <text evidence="1">Domain I is involved in oligomerization and binding regulators, domain II is flexibile and of varying length in different bacteria, domain III forms the AAA+ region, while domain IV binds dsDNA.</text>
</comment>
<comment type="similarity">
    <text evidence="1">Belongs to the DnaA family.</text>
</comment>
<organism>
    <name type="scientific">Clostridium botulinum (strain ATCC 19397 / Type A)</name>
    <dbReference type="NCBI Taxonomy" id="441770"/>
    <lineage>
        <taxon>Bacteria</taxon>
        <taxon>Bacillati</taxon>
        <taxon>Bacillota</taxon>
        <taxon>Clostridia</taxon>
        <taxon>Eubacteriales</taxon>
        <taxon>Clostridiaceae</taxon>
        <taxon>Clostridium</taxon>
    </lineage>
</organism>
<proteinExistence type="inferred from homology"/>
<reference key="1">
    <citation type="journal article" date="2007" name="PLoS ONE">
        <title>Analysis of the neurotoxin complex genes in Clostridium botulinum A1-A4 and B1 strains: BoNT/A3, /Ba4 and /B1 clusters are located within plasmids.</title>
        <authorList>
            <person name="Smith T.J."/>
            <person name="Hill K.K."/>
            <person name="Foley B.T."/>
            <person name="Detter J.C."/>
            <person name="Munk A.C."/>
            <person name="Bruce D.C."/>
            <person name="Doggett N.A."/>
            <person name="Smith L.A."/>
            <person name="Marks J.D."/>
            <person name="Xie G."/>
            <person name="Brettin T.S."/>
        </authorList>
    </citation>
    <scope>NUCLEOTIDE SEQUENCE [LARGE SCALE GENOMIC DNA]</scope>
    <source>
        <strain>ATCC 19397 / Type A</strain>
    </source>
</reference>
<accession>A7FPR6</accession>
<feature type="chain" id="PRO_1000048632" description="Chromosomal replication initiator protein DnaA">
    <location>
        <begin position="1"/>
        <end position="448"/>
    </location>
</feature>
<feature type="region of interest" description="Domain I, interacts with DnaA modulators" evidence="1">
    <location>
        <begin position="1"/>
        <end position="73"/>
    </location>
</feature>
<feature type="region of interest" description="Domain II" evidence="1">
    <location>
        <begin position="73"/>
        <end position="109"/>
    </location>
</feature>
<feature type="region of interest" description="Domain III, AAA+ region" evidence="1">
    <location>
        <begin position="110"/>
        <end position="326"/>
    </location>
</feature>
<feature type="region of interest" description="Domain IV, binds dsDNA" evidence="1">
    <location>
        <begin position="327"/>
        <end position="448"/>
    </location>
</feature>
<feature type="binding site" evidence="1">
    <location>
        <position position="154"/>
    </location>
    <ligand>
        <name>ATP</name>
        <dbReference type="ChEBI" id="CHEBI:30616"/>
    </ligand>
</feature>
<feature type="binding site" evidence="1">
    <location>
        <position position="156"/>
    </location>
    <ligand>
        <name>ATP</name>
        <dbReference type="ChEBI" id="CHEBI:30616"/>
    </ligand>
</feature>
<feature type="binding site" evidence="1">
    <location>
        <position position="157"/>
    </location>
    <ligand>
        <name>ATP</name>
        <dbReference type="ChEBI" id="CHEBI:30616"/>
    </ligand>
</feature>
<feature type="binding site" evidence="1">
    <location>
        <position position="158"/>
    </location>
    <ligand>
        <name>ATP</name>
        <dbReference type="ChEBI" id="CHEBI:30616"/>
    </ligand>
</feature>
<keyword id="KW-0067">ATP-binding</keyword>
<keyword id="KW-0963">Cytoplasm</keyword>
<keyword id="KW-0235">DNA replication</keyword>
<keyword id="KW-0238">DNA-binding</keyword>
<keyword id="KW-0446">Lipid-binding</keyword>
<keyword id="KW-0547">Nucleotide-binding</keyword>
<dbReference type="EMBL" id="CP000726">
    <property type="protein sequence ID" value="ABS32387.1"/>
    <property type="molecule type" value="Genomic_DNA"/>
</dbReference>
<dbReference type="RefSeq" id="WP_011947895.1">
    <property type="nucleotide sequence ID" value="NC_009697.1"/>
</dbReference>
<dbReference type="SMR" id="A7FPR6"/>
<dbReference type="GeneID" id="5187220"/>
<dbReference type="KEGG" id="cba:CLB_0001"/>
<dbReference type="HOGENOM" id="CLU_026910_3_1_9"/>
<dbReference type="GO" id="GO:0005737">
    <property type="term" value="C:cytoplasm"/>
    <property type="evidence" value="ECO:0007669"/>
    <property type="project" value="UniProtKB-SubCell"/>
</dbReference>
<dbReference type="GO" id="GO:0005886">
    <property type="term" value="C:plasma membrane"/>
    <property type="evidence" value="ECO:0007669"/>
    <property type="project" value="TreeGrafter"/>
</dbReference>
<dbReference type="GO" id="GO:0005524">
    <property type="term" value="F:ATP binding"/>
    <property type="evidence" value="ECO:0007669"/>
    <property type="project" value="UniProtKB-UniRule"/>
</dbReference>
<dbReference type="GO" id="GO:0016887">
    <property type="term" value="F:ATP hydrolysis activity"/>
    <property type="evidence" value="ECO:0007669"/>
    <property type="project" value="InterPro"/>
</dbReference>
<dbReference type="GO" id="GO:0003688">
    <property type="term" value="F:DNA replication origin binding"/>
    <property type="evidence" value="ECO:0007669"/>
    <property type="project" value="UniProtKB-UniRule"/>
</dbReference>
<dbReference type="GO" id="GO:0008289">
    <property type="term" value="F:lipid binding"/>
    <property type="evidence" value="ECO:0007669"/>
    <property type="project" value="UniProtKB-KW"/>
</dbReference>
<dbReference type="GO" id="GO:0006270">
    <property type="term" value="P:DNA replication initiation"/>
    <property type="evidence" value="ECO:0007669"/>
    <property type="project" value="UniProtKB-UniRule"/>
</dbReference>
<dbReference type="GO" id="GO:0006275">
    <property type="term" value="P:regulation of DNA replication"/>
    <property type="evidence" value="ECO:0007669"/>
    <property type="project" value="UniProtKB-UniRule"/>
</dbReference>
<dbReference type="CDD" id="cd00009">
    <property type="entry name" value="AAA"/>
    <property type="match status" value="1"/>
</dbReference>
<dbReference type="CDD" id="cd06571">
    <property type="entry name" value="Bac_DnaA_C"/>
    <property type="match status" value="1"/>
</dbReference>
<dbReference type="FunFam" id="1.10.1750.10:FF:000003">
    <property type="entry name" value="Chromosomal replication initiator protein DnaA"/>
    <property type="match status" value="1"/>
</dbReference>
<dbReference type="FunFam" id="1.10.8.60:FF:000003">
    <property type="entry name" value="Chromosomal replication initiator protein DnaA"/>
    <property type="match status" value="1"/>
</dbReference>
<dbReference type="FunFam" id="3.40.50.300:FF:000150">
    <property type="entry name" value="Chromosomal replication initiator protein DnaA"/>
    <property type="match status" value="1"/>
</dbReference>
<dbReference type="Gene3D" id="1.10.1750.10">
    <property type="match status" value="1"/>
</dbReference>
<dbReference type="Gene3D" id="1.10.8.60">
    <property type="match status" value="1"/>
</dbReference>
<dbReference type="Gene3D" id="3.30.300.180">
    <property type="match status" value="1"/>
</dbReference>
<dbReference type="Gene3D" id="3.40.50.300">
    <property type="entry name" value="P-loop containing nucleotide triphosphate hydrolases"/>
    <property type="match status" value="1"/>
</dbReference>
<dbReference type="HAMAP" id="MF_00377">
    <property type="entry name" value="DnaA_bact"/>
    <property type="match status" value="1"/>
</dbReference>
<dbReference type="InterPro" id="IPR003593">
    <property type="entry name" value="AAA+_ATPase"/>
</dbReference>
<dbReference type="InterPro" id="IPR001957">
    <property type="entry name" value="Chromosome_initiator_DnaA"/>
</dbReference>
<dbReference type="InterPro" id="IPR020591">
    <property type="entry name" value="Chromosome_initiator_DnaA-like"/>
</dbReference>
<dbReference type="InterPro" id="IPR018312">
    <property type="entry name" value="Chromosome_initiator_DnaA_CS"/>
</dbReference>
<dbReference type="InterPro" id="IPR013159">
    <property type="entry name" value="DnaA_C"/>
</dbReference>
<dbReference type="InterPro" id="IPR013317">
    <property type="entry name" value="DnaA_dom"/>
</dbReference>
<dbReference type="InterPro" id="IPR024633">
    <property type="entry name" value="DnaA_N_dom"/>
</dbReference>
<dbReference type="InterPro" id="IPR038454">
    <property type="entry name" value="DnaA_N_sf"/>
</dbReference>
<dbReference type="InterPro" id="IPR027417">
    <property type="entry name" value="P-loop_NTPase"/>
</dbReference>
<dbReference type="InterPro" id="IPR010921">
    <property type="entry name" value="Trp_repressor/repl_initiator"/>
</dbReference>
<dbReference type="NCBIfam" id="TIGR00362">
    <property type="entry name" value="DnaA"/>
    <property type="match status" value="1"/>
</dbReference>
<dbReference type="NCBIfam" id="NF010686">
    <property type="entry name" value="PRK14086.1"/>
    <property type="match status" value="1"/>
</dbReference>
<dbReference type="PANTHER" id="PTHR30050">
    <property type="entry name" value="CHROMOSOMAL REPLICATION INITIATOR PROTEIN DNAA"/>
    <property type="match status" value="1"/>
</dbReference>
<dbReference type="PANTHER" id="PTHR30050:SF2">
    <property type="entry name" value="CHROMOSOMAL REPLICATION INITIATOR PROTEIN DNAA"/>
    <property type="match status" value="1"/>
</dbReference>
<dbReference type="Pfam" id="PF00308">
    <property type="entry name" value="Bac_DnaA"/>
    <property type="match status" value="1"/>
</dbReference>
<dbReference type="Pfam" id="PF08299">
    <property type="entry name" value="Bac_DnaA_C"/>
    <property type="match status" value="1"/>
</dbReference>
<dbReference type="Pfam" id="PF11638">
    <property type="entry name" value="DnaA_N"/>
    <property type="match status" value="1"/>
</dbReference>
<dbReference type="PRINTS" id="PR00051">
    <property type="entry name" value="DNAA"/>
</dbReference>
<dbReference type="SMART" id="SM00382">
    <property type="entry name" value="AAA"/>
    <property type="match status" value="1"/>
</dbReference>
<dbReference type="SMART" id="SM00760">
    <property type="entry name" value="Bac_DnaA_C"/>
    <property type="match status" value="1"/>
</dbReference>
<dbReference type="SUPFAM" id="SSF52540">
    <property type="entry name" value="P-loop containing nucleoside triphosphate hydrolases"/>
    <property type="match status" value="1"/>
</dbReference>
<dbReference type="SUPFAM" id="SSF48295">
    <property type="entry name" value="TrpR-like"/>
    <property type="match status" value="1"/>
</dbReference>
<dbReference type="PROSITE" id="PS01008">
    <property type="entry name" value="DNAA"/>
    <property type="match status" value="1"/>
</dbReference>
<evidence type="ECO:0000255" key="1">
    <source>
        <dbReference type="HAMAP-Rule" id="MF_00377"/>
    </source>
</evidence>
<name>DNAA_CLOB1</name>
<sequence>MNTHLTETWEKAINIIKGELTEVSFNTWIKSINPISLENNSLKLAVPNDFTKGILESRYKDLIVNALKLLTSKKYNIDFIVTTEEKIEENQKNHNNEKSNIVVNDEMSTMLNPKYTFDSFVIGNSNRFAHAASLAVAESPAKAYNPLFIYGGVGLGKTHLMHAIGHYILHNNPKSQVVYVSSEKFTNELINSIKDDKNVEFRNKYRNIDILLVDDIQFIAGKERTQEEFFHTFNALYEANKQIIISSDRPPKEIPTLEDRLRSRFEWGLIADIQAPDFETRMAILKKKADVENLNIPNEVMVYIATKIKSNIRELEGALIRIVAFSSLTNKEISIDLASEALKDIISSKQTRQVTIDIIQEVVANYYNLKIEDLKSARRTRNIAFPRQIAMYLSRKLTDMSLPKIGEEFGGRDHTTVIHAYEKISNNLKKDESLQNAIKELNKRINQK</sequence>
<gene>
    <name evidence="1" type="primary">dnaA</name>
    <name type="ordered locus">CLB_0001</name>
</gene>
<protein>
    <recommendedName>
        <fullName evidence="1">Chromosomal replication initiator protein DnaA</fullName>
    </recommendedName>
</protein>